<proteinExistence type="inferred from homology"/>
<accession>O99800</accession>
<gene>
    <name type="primary">MT-CYB</name>
    <name type="synonym">COB</name>
    <name type="synonym">CYTB</name>
    <name type="synonym">MTCYB</name>
</gene>
<sequence>MNNIRKNHPLMKIMNNSFIDLPAPSNISSWWNFGSLLGACLTLQIITGLFLAMHYTADTTTAFSSVAHICRDVNYGWIIRYLHANGASMFFLCLFIHIGRGLYYGSFTLTETWNIGIILLFTVMATAFMGYVLPWGQMSFWGATVITNLLSAIPYIGTNLVEWIWGGFSVDKATLTRFFAFHFILPFIIAALVLVHLLFLHETGSNNPLGTSSDSDKIPFHPYYTIKDLLGLLLLILLAMMLVLFSPDLLGDPDNYTPANPLSTPPHIKPEWYFLFAYAILRSIPNKLGGVLALISSILILAIIPILHTAKQRSMLFRPLSQCLFWTLTADLFILTWIGGQPVEHPFITIGQAASILYFTLILILMPMASLIENKMLKW</sequence>
<protein>
    <recommendedName>
        <fullName>Cytochrome b</fullName>
    </recommendedName>
    <alternativeName>
        <fullName>Complex III subunit 3</fullName>
    </alternativeName>
    <alternativeName>
        <fullName>Complex III subunit III</fullName>
    </alternativeName>
    <alternativeName>
        <fullName>Cytochrome b-c1 complex subunit 3</fullName>
    </alternativeName>
    <alternativeName>
        <fullName>Ubiquinol-cytochrome-c reductase complex cytochrome b subunit</fullName>
    </alternativeName>
</protein>
<dbReference type="EMBL" id="AF081052">
    <property type="protein sequence ID" value="AAD13169.1"/>
    <property type="molecule type" value="Genomic_DNA"/>
</dbReference>
<dbReference type="RefSeq" id="YP_009114795.1">
    <property type="nucleotide sequence ID" value="NC_026098.1"/>
</dbReference>
<dbReference type="SMR" id="O99800"/>
<dbReference type="GeneID" id="22833322"/>
<dbReference type="CTD" id="4519"/>
<dbReference type="GO" id="GO:0005743">
    <property type="term" value="C:mitochondrial inner membrane"/>
    <property type="evidence" value="ECO:0007669"/>
    <property type="project" value="UniProtKB-SubCell"/>
</dbReference>
<dbReference type="GO" id="GO:0045275">
    <property type="term" value="C:respiratory chain complex III"/>
    <property type="evidence" value="ECO:0007669"/>
    <property type="project" value="InterPro"/>
</dbReference>
<dbReference type="GO" id="GO:0046872">
    <property type="term" value="F:metal ion binding"/>
    <property type="evidence" value="ECO:0007669"/>
    <property type="project" value="UniProtKB-KW"/>
</dbReference>
<dbReference type="GO" id="GO:0008121">
    <property type="term" value="F:ubiquinol-cytochrome-c reductase activity"/>
    <property type="evidence" value="ECO:0007669"/>
    <property type="project" value="InterPro"/>
</dbReference>
<dbReference type="GO" id="GO:0006122">
    <property type="term" value="P:mitochondrial electron transport, ubiquinol to cytochrome c"/>
    <property type="evidence" value="ECO:0007669"/>
    <property type="project" value="TreeGrafter"/>
</dbReference>
<dbReference type="CDD" id="cd00290">
    <property type="entry name" value="cytochrome_b_C"/>
    <property type="match status" value="1"/>
</dbReference>
<dbReference type="CDD" id="cd00284">
    <property type="entry name" value="Cytochrome_b_N"/>
    <property type="match status" value="1"/>
</dbReference>
<dbReference type="FunFam" id="1.20.810.10:FF:000002">
    <property type="entry name" value="Cytochrome b"/>
    <property type="match status" value="1"/>
</dbReference>
<dbReference type="Gene3D" id="1.20.810.10">
    <property type="entry name" value="Cytochrome Bc1 Complex, Chain C"/>
    <property type="match status" value="1"/>
</dbReference>
<dbReference type="InterPro" id="IPR005798">
    <property type="entry name" value="Cyt_b/b6_C"/>
</dbReference>
<dbReference type="InterPro" id="IPR036150">
    <property type="entry name" value="Cyt_b/b6_C_sf"/>
</dbReference>
<dbReference type="InterPro" id="IPR005797">
    <property type="entry name" value="Cyt_b/b6_N"/>
</dbReference>
<dbReference type="InterPro" id="IPR027387">
    <property type="entry name" value="Cytb/b6-like_sf"/>
</dbReference>
<dbReference type="InterPro" id="IPR030689">
    <property type="entry name" value="Cytochrome_b"/>
</dbReference>
<dbReference type="InterPro" id="IPR048260">
    <property type="entry name" value="Cytochrome_b_C_euk/bac"/>
</dbReference>
<dbReference type="InterPro" id="IPR048259">
    <property type="entry name" value="Cytochrome_b_N_euk/bac"/>
</dbReference>
<dbReference type="InterPro" id="IPR016174">
    <property type="entry name" value="Di-haem_cyt_TM"/>
</dbReference>
<dbReference type="PANTHER" id="PTHR19271">
    <property type="entry name" value="CYTOCHROME B"/>
    <property type="match status" value="1"/>
</dbReference>
<dbReference type="PANTHER" id="PTHR19271:SF16">
    <property type="entry name" value="CYTOCHROME B"/>
    <property type="match status" value="1"/>
</dbReference>
<dbReference type="Pfam" id="PF00032">
    <property type="entry name" value="Cytochrom_B_C"/>
    <property type="match status" value="1"/>
</dbReference>
<dbReference type="Pfam" id="PF00033">
    <property type="entry name" value="Cytochrome_B"/>
    <property type="match status" value="1"/>
</dbReference>
<dbReference type="PIRSF" id="PIRSF038885">
    <property type="entry name" value="COB"/>
    <property type="match status" value="1"/>
</dbReference>
<dbReference type="SUPFAM" id="SSF81648">
    <property type="entry name" value="a domain/subunit of cytochrome bc1 complex (Ubiquinol-cytochrome c reductase)"/>
    <property type="match status" value="1"/>
</dbReference>
<dbReference type="SUPFAM" id="SSF81342">
    <property type="entry name" value="Transmembrane di-heme cytochromes"/>
    <property type="match status" value="1"/>
</dbReference>
<dbReference type="PROSITE" id="PS51003">
    <property type="entry name" value="CYTB_CTER"/>
    <property type="match status" value="1"/>
</dbReference>
<dbReference type="PROSITE" id="PS51002">
    <property type="entry name" value="CYTB_NTER"/>
    <property type="match status" value="1"/>
</dbReference>
<name>CYB_EULRU</name>
<comment type="function">
    <text evidence="2">Component of the ubiquinol-cytochrome c reductase complex (complex III or cytochrome b-c1 complex) that is part of the mitochondrial respiratory chain. The b-c1 complex mediates electron transfer from ubiquinol to cytochrome c. Contributes to the generation of a proton gradient across the mitochondrial membrane that is then used for ATP synthesis.</text>
</comment>
<comment type="cofactor">
    <cofactor evidence="2">
        <name>heme b</name>
        <dbReference type="ChEBI" id="CHEBI:60344"/>
    </cofactor>
    <text evidence="2">Binds 2 heme b groups non-covalently.</text>
</comment>
<comment type="subunit">
    <text evidence="2">The cytochrome bc1 complex contains 11 subunits: 3 respiratory subunits (MT-CYB, CYC1 and UQCRFS1), 2 core proteins (UQCRC1 and UQCRC2) and 6 low-molecular weight proteins (UQCRH/QCR6, UQCRB/QCR7, UQCRQ/QCR8, UQCR10/QCR9, UQCR11/QCR10 and a cleavage product of UQCRFS1). This cytochrome bc1 complex then forms a dimer.</text>
</comment>
<comment type="subcellular location">
    <subcellularLocation>
        <location evidence="2">Mitochondrion inner membrane</location>
        <topology evidence="2">Multi-pass membrane protein</topology>
    </subcellularLocation>
</comment>
<comment type="miscellaneous">
    <text evidence="1">Heme 1 (or BL or b562) is low-potential and absorbs at about 562 nm, and heme 2 (or BH or b566) is high-potential and absorbs at about 566 nm.</text>
</comment>
<comment type="similarity">
    <text evidence="3 4">Belongs to the cytochrome b family.</text>
</comment>
<comment type="caution">
    <text evidence="2">The full-length protein contains only eight transmembrane helices, not nine as predicted by bioinformatics tools.</text>
</comment>
<reference key="1">
    <citation type="journal article" date="1999" name="Cladistics">
        <title>Phylogeny of the Lemuridae: effects of character and taxon sampling on the resolution of species relationships within Eulemur.</title>
        <authorList>
            <person name="Yoder A.D."/>
            <person name="Irwin J.A."/>
        </authorList>
    </citation>
    <scope>NUCLEOTIDE SEQUENCE [GENOMIC DNA]</scope>
    <source>
        <strain>Isolate DUPC 6120m</strain>
        <tissue>Spleen</tissue>
    </source>
</reference>
<organism>
    <name type="scientific">Eulemur rubriventer</name>
    <name type="common">Red-bellied lemur</name>
    <dbReference type="NCBI Taxonomy" id="34829"/>
    <lineage>
        <taxon>Eukaryota</taxon>
        <taxon>Metazoa</taxon>
        <taxon>Chordata</taxon>
        <taxon>Craniata</taxon>
        <taxon>Vertebrata</taxon>
        <taxon>Euteleostomi</taxon>
        <taxon>Mammalia</taxon>
        <taxon>Eutheria</taxon>
        <taxon>Euarchontoglires</taxon>
        <taxon>Primates</taxon>
        <taxon>Strepsirrhini</taxon>
        <taxon>Lemuriformes</taxon>
        <taxon>Lemuridae</taxon>
        <taxon>Eulemur</taxon>
    </lineage>
</organism>
<keyword id="KW-0249">Electron transport</keyword>
<keyword id="KW-0349">Heme</keyword>
<keyword id="KW-0408">Iron</keyword>
<keyword id="KW-0472">Membrane</keyword>
<keyword id="KW-0479">Metal-binding</keyword>
<keyword id="KW-0496">Mitochondrion</keyword>
<keyword id="KW-0999">Mitochondrion inner membrane</keyword>
<keyword id="KW-0679">Respiratory chain</keyword>
<keyword id="KW-0812">Transmembrane</keyword>
<keyword id="KW-1133">Transmembrane helix</keyword>
<keyword id="KW-0813">Transport</keyword>
<keyword id="KW-0830">Ubiquinone</keyword>
<evidence type="ECO:0000250" key="1"/>
<evidence type="ECO:0000250" key="2">
    <source>
        <dbReference type="UniProtKB" id="P00157"/>
    </source>
</evidence>
<evidence type="ECO:0000255" key="3">
    <source>
        <dbReference type="PROSITE-ProRule" id="PRU00967"/>
    </source>
</evidence>
<evidence type="ECO:0000255" key="4">
    <source>
        <dbReference type="PROSITE-ProRule" id="PRU00968"/>
    </source>
</evidence>
<feature type="chain" id="PRO_0000060958" description="Cytochrome b">
    <location>
        <begin position="1"/>
        <end position="379"/>
    </location>
</feature>
<feature type="transmembrane region" description="Helical" evidence="2">
    <location>
        <begin position="33"/>
        <end position="53"/>
    </location>
</feature>
<feature type="transmembrane region" description="Helical" evidence="2">
    <location>
        <begin position="77"/>
        <end position="98"/>
    </location>
</feature>
<feature type="transmembrane region" description="Helical" evidence="2">
    <location>
        <begin position="113"/>
        <end position="133"/>
    </location>
</feature>
<feature type="transmembrane region" description="Helical" evidence="2">
    <location>
        <begin position="178"/>
        <end position="198"/>
    </location>
</feature>
<feature type="transmembrane region" description="Helical" evidence="2">
    <location>
        <begin position="226"/>
        <end position="246"/>
    </location>
</feature>
<feature type="transmembrane region" description="Helical" evidence="2">
    <location>
        <begin position="288"/>
        <end position="308"/>
    </location>
</feature>
<feature type="transmembrane region" description="Helical" evidence="2">
    <location>
        <begin position="320"/>
        <end position="340"/>
    </location>
</feature>
<feature type="transmembrane region" description="Helical" evidence="2">
    <location>
        <begin position="347"/>
        <end position="367"/>
    </location>
</feature>
<feature type="binding site" description="axial binding residue" evidence="2">
    <location>
        <position position="83"/>
    </location>
    <ligand>
        <name>heme b</name>
        <dbReference type="ChEBI" id="CHEBI:60344"/>
        <label>b562</label>
    </ligand>
    <ligandPart>
        <name>Fe</name>
        <dbReference type="ChEBI" id="CHEBI:18248"/>
    </ligandPart>
</feature>
<feature type="binding site" description="axial binding residue" evidence="2">
    <location>
        <position position="97"/>
    </location>
    <ligand>
        <name>heme b</name>
        <dbReference type="ChEBI" id="CHEBI:60344"/>
        <label>b566</label>
    </ligand>
    <ligandPart>
        <name>Fe</name>
        <dbReference type="ChEBI" id="CHEBI:18248"/>
    </ligandPart>
</feature>
<feature type="binding site" description="axial binding residue" evidence="2">
    <location>
        <position position="182"/>
    </location>
    <ligand>
        <name>heme b</name>
        <dbReference type="ChEBI" id="CHEBI:60344"/>
        <label>b562</label>
    </ligand>
    <ligandPart>
        <name>Fe</name>
        <dbReference type="ChEBI" id="CHEBI:18248"/>
    </ligandPart>
</feature>
<feature type="binding site" description="axial binding residue" evidence="2">
    <location>
        <position position="196"/>
    </location>
    <ligand>
        <name>heme b</name>
        <dbReference type="ChEBI" id="CHEBI:60344"/>
        <label>b566</label>
    </ligand>
    <ligandPart>
        <name>Fe</name>
        <dbReference type="ChEBI" id="CHEBI:18248"/>
    </ligandPart>
</feature>
<feature type="binding site" evidence="2">
    <location>
        <position position="201"/>
    </location>
    <ligand>
        <name>a ubiquinone</name>
        <dbReference type="ChEBI" id="CHEBI:16389"/>
    </ligand>
</feature>
<geneLocation type="mitochondrion"/>